<evidence type="ECO:0000255" key="1">
    <source>
        <dbReference type="HAMAP-Rule" id="MF_01643"/>
    </source>
</evidence>
<evidence type="ECO:0000256" key="2">
    <source>
        <dbReference type="SAM" id="MobiDB-lite"/>
    </source>
</evidence>
<accession>Q142Q7</accession>
<name>PURT_PARXL</name>
<sequence length="404" mass="43155">MQIGQRIGTPLSESATRVMLLGAGELGKEVIIALQRLGVEVIAVDRYPNAPGHQVAHRAHVIDMTDRAALRALVEQERPHLIVPEIEAIATDELAAIESAGLAEVIPTARATQLTMNREGIRRLAAEELGLPTSPYAFADSLDELRAGIAKVGYPCVVKPVMSSSGKGQSVLRGDADVEPAWQYAMAGGRVNHGRVIVEGFIDFEYEITQLTVRAINPASGEVSTYFCDPIGHVQVAGDYVESWQPQPMSPLALERSREVAHKVTAALGGRGLFGVELFVRGDDVWFSEVSPRPHDTGLVTLCSQRFSEFELHARAILGLPVDTSLRAPGASAVIYGGLDEAGIAFEGVAAALAVPNADLRLFGKPESFVKRRMGVALATGETTDEARSRAKQAAAAVRPVSAK</sequence>
<dbReference type="EC" id="6.3.1.21" evidence="1"/>
<dbReference type="EMBL" id="CP000270">
    <property type="protein sequence ID" value="ABE29682.1"/>
    <property type="molecule type" value="Genomic_DNA"/>
</dbReference>
<dbReference type="RefSeq" id="WP_011487415.1">
    <property type="nucleotide sequence ID" value="NC_007951.1"/>
</dbReference>
<dbReference type="SMR" id="Q142Q7"/>
<dbReference type="STRING" id="266265.Bxe_A3301"/>
<dbReference type="KEGG" id="bxb:DR64_1001"/>
<dbReference type="KEGG" id="bxe:Bxe_A3301"/>
<dbReference type="PATRIC" id="fig|266265.5.peg.1177"/>
<dbReference type="eggNOG" id="COG0027">
    <property type="taxonomic scope" value="Bacteria"/>
</dbReference>
<dbReference type="OrthoDB" id="9804625at2"/>
<dbReference type="UniPathway" id="UPA00074">
    <property type="reaction ID" value="UER00127"/>
</dbReference>
<dbReference type="Proteomes" id="UP000001817">
    <property type="component" value="Chromosome 1"/>
</dbReference>
<dbReference type="GO" id="GO:0005829">
    <property type="term" value="C:cytosol"/>
    <property type="evidence" value="ECO:0007669"/>
    <property type="project" value="TreeGrafter"/>
</dbReference>
<dbReference type="GO" id="GO:0005524">
    <property type="term" value="F:ATP binding"/>
    <property type="evidence" value="ECO:0007669"/>
    <property type="project" value="UniProtKB-UniRule"/>
</dbReference>
<dbReference type="GO" id="GO:0000287">
    <property type="term" value="F:magnesium ion binding"/>
    <property type="evidence" value="ECO:0007669"/>
    <property type="project" value="InterPro"/>
</dbReference>
<dbReference type="GO" id="GO:0043815">
    <property type="term" value="F:phosphoribosylglycinamide formyltransferase 2 activity"/>
    <property type="evidence" value="ECO:0007669"/>
    <property type="project" value="UniProtKB-UniRule"/>
</dbReference>
<dbReference type="GO" id="GO:0004644">
    <property type="term" value="F:phosphoribosylglycinamide formyltransferase activity"/>
    <property type="evidence" value="ECO:0007669"/>
    <property type="project" value="InterPro"/>
</dbReference>
<dbReference type="GO" id="GO:0006189">
    <property type="term" value="P:'de novo' IMP biosynthetic process"/>
    <property type="evidence" value="ECO:0007669"/>
    <property type="project" value="UniProtKB-UniRule"/>
</dbReference>
<dbReference type="FunFam" id="3.30.1490.20:FF:000013">
    <property type="entry name" value="Formate-dependent phosphoribosylglycinamide formyltransferase"/>
    <property type="match status" value="1"/>
</dbReference>
<dbReference type="FunFam" id="3.40.50.20:FF:000007">
    <property type="entry name" value="Formate-dependent phosphoribosylglycinamide formyltransferase"/>
    <property type="match status" value="1"/>
</dbReference>
<dbReference type="Gene3D" id="3.40.50.20">
    <property type="match status" value="1"/>
</dbReference>
<dbReference type="Gene3D" id="3.30.1490.20">
    <property type="entry name" value="ATP-grasp fold, A domain"/>
    <property type="match status" value="1"/>
</dbReference>
<dbReference type="Gene3D" id="3.30.470.20">
    <property type="entry name" value="ATP-grasp fold, B domain"/>
    <property type="match status" value="1"/>
</dbReference>
<dbReference type="HAMAP" id="MF_01643">
    <property type="entry name" value="PurT"/>
    <property type="match status" value="1"/>
</dbReference>
<dbReference type="InterPro" id="IPR011761">
    <property type="entry name" value="ATP-grasp"/>
</dbReference>
<dbReference type="InterPro" id="IPR003135">
    <property type="entry name" value="ATP-grasp_carboxylate-amine"/>
</dbReference>
<dbReference type="InterPro" id="IPR013815">
    <property type="entry name" value="ATP_grasp_subdomain_1"/>
</dbReference>
<dbReference type="InterPro" id="IPR016185">
    <property type="entry name" value="PreATP-grasp_dom_sf"/>
</dbReference>
<dbReference type="InterPro" id="IPR005862">
    <property type="entry name" value="PurT"/>
</dbReference>
<dbReference type="InterPro" id="IPR054350">
    <property type="entry name" value="PurT/PurK_preATP-grasp"/>
</dbReference>
<dbReference type="InterPro" id="IPR048740">
    <property type="entry name" value="PurT_C"/>
</dbReference>
<dbReference type="InterPro" id="IPR011054">
    <property type="entry name" value="Rudment_hybrid_motif"/>
</dbReference>
<dbReference type="NCBIfam" id="NF006766">
    <property type="entry name" value="PRK09288.1"/>
    <property type="match status" value="1"/>
</dbReference>
<dbReference type="NCBIfam" id="TIGR01142">
    <property type="entry name" value="purT"/>
    <property type="match status" value="1"/>
</dbReference>
<dbReference type="PANTHER" id="PTHR43055">
    <property type="entry name" value="FORMATE-DEPENDENT PHOSPHORIBOSYLGLYCINAMIDE FORMYLTRANSFERASE"/>
    <property type="match status" value="1"/>
</dbReference>
<dbReference type="PANTHER" id="PTHR43055:SF1">
    <property type="entry name" value="FORMATE-DEPENDENT PHOSPHORIBOSYLGLYCINAMIDE FORMYLTRANSFERASE"/>
    <property type="match status" value="1"/>
</dbReference>
<dbReference type="Pfam" id="PF02222">
    <property type="entry name" value="ATP-grasp"/>
    <property type="match status" value="1"/>
</dbReference>
<dbReference type="Pfam" id="PF21244">
    <property type="entry name" value="PurT_C"/>
    <property type="match status" value="1"/>
</dbReference>
<dbReference type="Pfam" id="PF22660">
    <property type="entry name" value="RS_preATP-grasp-like"/>
    <property type="match status" value="1"/>
</dbReference>
<dbReference type="SUPFAM" id="SSF56059">
    <property type="entry name" value="Glutathione synthetase ATP-binding domain-like"/>
    <property type="match status" value="1"/>
</dbReference>
<dbReference type="SUPFAM" id="SSF52440">
    <property type="entry name" value="PreATP-grasp domain"/>
    <property type="match status" value="1"/>
</dbReference>
<dbReference type="SUPFAM" id="SSF51246">
    <property type="entry name" value="Rudiment single hybrid motif"/>
    <property type="match status" value="1"/>
</dbReference>
<dbReference type="PROSITE" id="PS50975">
    <property type="entry name" value="ATP_GRASP"/>
    <property type="match status" value="1"/>
</dbReference>
<protein>
    <recommendedName>
        <fullName evidence="1">Formate-dependent phosphoribosylglycinamide formyltransferase</fullName>
        <ecNumber evidence="1">6.3.1.21</ecNumber>
    </recommendedName>
    <alternativeName>
        <fullName evidence="1">5'-phosphoribosylglycinamide transformylase 2</fullName>
    </alternativeName>
    <alternativeName>
        <fullName evidence="1">Formate-dependent GAR transformylase</fullName>
    </alternativeName>
    <alternativeName>
        <fullName evidence="1">GAR transformylase 2</fullName>
        <shortName evidence="1">GART 2</shortName>
    </alternativeName>
    <alternativeName>
        <fullName evidence="1">Non-folate glycinamide ribonucleotide transformylase</fullName>
    </alternativeName>
    <alternativeName>
        <fullName evidence="1">Phosphoribosylglycinamide formyltransferase 2</fullName>
    </alternativeName>
</protein>
<reference key="1">
    <citation type="journal article" date="2006" name="Proc. Natl. Acad. Sci. U.S.A.">
        <title>Burkholderia xenovorans LB400 harbors a multi-replicon, 9.73-Mbp genome shaped for versatility.</title>
        <authorList>
            <person name="Chain P.S.G."/>
            <person name="Denef V.J."/>
            <person name="Konstantinidis K.T."/>
            <person name="Vergez L.M."/>
            <person name="Agullo L."/>
            <person name="Reyes V.L."/>
            <person name="Hauser L."/>
            <person name="Cordova M."/>
            <person name="Gomez L."/>
            <person name="Gonzalez M."/>
            <person name="Land M."/>
            <person name="Lao V."/>
            <person name="Larimer F."/>
            <person name="LiPuma J.J."/>
            <person name="Mahenthiralingam E."/>
            <person name="Malfatti S.A."/>
            <person name="Marx C.J."/>
            <person name="Parnell J.J."/>
            <person name="Ramette A."/>
            <person name="Richardson P."/>
            <person name="Seeger M."/>
            <person name="Smith D."/>
            <person name="Spilker T."/>
            <person name="Sul W.J."/>
            <person name="Tsoi T.V."/>
            <person name="Ulrich L.E."/>
            <person name="Zhulin I.B."/>
            <person name="Tiedje J.M."/>
        </authorList>
    </citation>
    <scope>NUCLEOTIDE SEQUENCE [LARGE SCALE GENOMIC DNA]</scope>
    <source>
        <strain>LB400</strain>
    </source>
</reference>
<keyword id="KW-0067">ATP-binding</keyword>
<keyword id="KW-0436">Ligase</keyword>
<keyword id="KW-0460">Magnesium</keyword>
<keyword id="KW-0479">Metal-binding</keyword>
<keyword id="KW-0547">Nucleotide-binding</keyword>
<keyword id="KW-0658">Purine biosynthesis</keyword>
<keyword id="KW-1185">Reference proteome</keyword>
<feature type="chain" id="PRO_0000319148" description="Formate-dependent phosphoribosylglycinamide formyltransferase">
    <location>
        <begin position="1"/>
        <end position="404"/>
    </location>
</feature>
<feature type="domain" description="ATP-grasp" evidence="1">
    <location>
        <begin position="123"/>
        <end position="318"/>
    </location>
</feature>
<feature type="region of interest" description="Disordered" evidence="2">
    <location>
        <begin position="384"/>
        <end position="404"/>
    </location>
</feature>
<feature type="compositionally biased region" description="Low complexity" evidence="2">
    <location>
        <begin position="392"/>
        <end position="404"/>
    </location>
</feature>
<feature type="binding site" evidence="1">
    <location>
        <begin position="25"/>
        <end position="26"/>
    </location>
    <ligand>
        <name>N(1)-(5-phospho-beta-D-ribosyl)glycinamide</name>
        <dbReference type="ChEBI" id="CHEBI:143788"/>
    </ligand>
</feature>
<feature type="binding site" evidence="1">
    <location>
        <position position="85"/>
    </location>
    <ligand>
        <name>N(1)-(5-phospho-beta-D-ribosyl)glycinamide</name>
        <dbReference type="ChEBI" id="CHEBI:143788"/>
    </ligand>
</feature>
<feature type="binding site" evidence="1">
    <location>
        <position position="118"/>
    </location>
    <ligand>
        <name>ATP</name>
        <dbReference type="ChEBI" id="CHEBI:30616"/>
    </ligand>
</feature>
<feature type="binding site" evidence="1">
    <location>
        <position position="159"/>
    </location>
    <ligand>
        <name>ATP</name>
        <dbReference type="ChEBI" id="CHEBI:30616"/>
    </ligand>
</feature>
<feature type="binding site" evidence="1">
    <location>
        <begin position="164"/>
        <end position="169"/>
    </location>
    <ligand>
        <name>ATP</name>
        <dbReference type="ChEBI" id="CHEBI:30616"/>
    </ligand>
</feature>
<feature type="binding site" evidence="1">
    <location>
        <begin position="199"/>
        <end position="202"/>
    </location>
    <ligand>
        <name>ATP</name>
        <dbReference type="ChEBI" id="CHEBI:30616"/>
    </ligand>
</feature>
<feature type="binding site" evidence="1">
    <location>
        <position position="207"/>
    </location>
    <ligand>
        <name>ATP</name>
        <dbReference type="ChEBI" id="CHEBI:30616"/>
    </ligand>
</feature>
<feature type="binding site" evidence="1">
    <location>
        <position position="277"/>
    </location>
    <ligand>
        <name>Mg(2+)</name>
        <dbReference type="ChEBI" id="CHEBI:18420"/>
    </ligand>
</feature>
<feature type="binding site" evidence="1">
    <location>
        <position position="289"/>
    </location>
    <ligand>
        <name>Mg(2+)</name>
        <dbReference type="ChEBI" id="CHEBI:18420"/>
    </ligand>
</feature>
<feature type="binding site" evidence="1">
    <location>
        <position position="296"/>
    </location>
    <ligand>
        <name>N(1)-(5-phospho-beta-D-ribosyl)glycinamide</name>
        <dbReference type="ChEBI" id="CHEBI:143788"/>
    </ligand>
</feature>
<feature type="binding site" evidence="1">
    <location>
        <position position="365"/>
    </location>
    <ligand>
        <name>N(1)-(5-phospho-beta-D-ribosyl)glycinamide</name>
        <dbReference type="ChEBI" id="CHEBI:143788"/>
    </ligand>
</feature>
<feature type="binding site" evidence="1">
    <location>
        <begin position="372"/>
        <end position="373"/>
    </location>
    <ligand>
        <name>N(1)-(5-phospho-beta-D-ribosyl)glycinamide</name>
        <dbReference type="ChEBI" id="CHEBI:143788"/>
    </ligand>
</feature>
<comment type="function">
    <text evidence="1">Involved in the de novo purine biosynthesis. Catalyzes the transfer of formate to 5-phospho-ribosyl-glycinamide (GAR), producing 5-phospho-ribosyl-N-formylglycinamide (FGAR). Formate is provided by PurU via hydrolysis of 10-formyl-tetrahydrofolate.</text>
</comment>
<comment type="catalytic activity">
    <reaction evidence="1">
        <text>N(1)-(5-phospho-beta-D-ribosyl)glycinamide + formate + ATP = N(2)-formyl-N(1)-(5-phospho-beta-D-ribosyl)glycinamide + ADP + phosphate + H(+)</text>
        <dbReference type="Rhea" id="RHEA:24829"/>
        <dbReference type="ChEBI" id="CHEBI:15378"/>
        <dbReference type="ChEBI" id="CHEBI:15740"/>
        <dbReference type="ChEBI" id="CHEBI:30616"/>
        <dbReference type="ChEBI" id="CHEBI:43474"/>
        <dbReference type="ChEBI" id="CHEBI:143788"/>
        <dbReference type="ChEBI" id="CHEBI:147286"/>
        <dbReference type="ChEBI" id="CHEBI:456216"/>
        <dbReference type="EC" id="6.3.1.21"/>
    </reaction>
    <physiologicalReaction direction="left-to-right" evidence="1">
        <dbReference type="Rhea" id="RHEA:24830"/>
    </physiologicalReaction>
</comment>
<comment type="pathway">
    <text evidence="1">Purine metabolism; IMP biosynthesis via de novo pathway; N(2)-formyl-N(1)-(5-phospho-D-ribosyl)glycinamide from N(1)-(5-phospho-D-ribosyl)glycinamide (formate route): step 1/1.</text>
</comment>
<comment type="subunit">
    <text evidence="1">Homodimer.</text>
</comment>
<comment type="similarity">
    <text evidence="1">Belongs to the PurK/PurT family.</text>
</comment>
<proteinExistence type="inferred from homology"/>
<gene>
    <name evidence="1" type="primary">purT</name>
    <name type="ordered locus">Bxeno_A1144</name>
    <name type="ORF">Bxe_A3301</name>
</gene>
<organism>
    <name type="scientific">Paraburkholderia xenovorans (strain LB400)</name>
    <dbReference type="NCBI Taxonomy" id="266265"/>
    <lineage>
        <taxon>Bacteria</taxon>
        <taxon>Pseudomonadati</taxon>
        <taxon>Pseudomonadota</taxon>
        <taxon>Betaproteobacteria</taxon>
        <taxon>Burkholderiales</taxon>
        <taxon>Burkholderiaceae</taxon>
        <taxon>Paraburkholderia</taxon>
    </lineage>
</organism>